<organism>
    <name type="scientific">Rhodopseudomonas palustris (strain HaA2)</name>
    <dbReference type="NCBI Taxonomy" id="316058"/>
    <lineage>
        <taxon>Bacteria</taxon>
        <taxon>Pseudomonadati</taxon>
        <taxon>Pseudomonadota</taxon>
        <taxon>Alphaproteobacteria</taxon>
        <taxon>Hyphomicrobiales</taxon>
        <taxon>Nitrobacteraceae</taxon>
        <taxon>Rhodopseudomonas</taxon>
    </lineage>
</organism>
<proteinExistence type="inferred from homology"/>
<name>RPOB_RHOP2</name>
<reference key="1">
    <citation type="submission" date="2006-01" db="EMBL/GenBank/DDBJ databases">
        <title>Complete sequence of Rhodopseudomonas palustris HaA2.</title>
        <authorList>
            <consortium name="US DOE Joint Genome Institute"/>
            <person name="Copeland A."/>
            <person name="Lucas S."/>
            <person name="Lapidus A."/>
            <person name="Barry K."/>
            <person name="Detter J.C."/>
            <person name="Glavina T."/>
            <person name="Hammon N."/>
            <person name="Israni S."/>
            <person name="Pitluck S."/>
            <person name="Chain P."/>
            <person name="Malfatti S."/>
            <person name="Shin M."/>
            <person name="Vergez L."/>
            <person name="Schmutz J."/>
            <person name="Larimer F."/>
            <person name="Land M."/>
            <person name="Hauser L."/>
            <person name="Pelletier D.A."/>
            <person name="Kyrpides N."/>
            <person name="Anderson I."/>
            <person name="Oda Y."/>
            <person name="Harwood C.S."/>
            <person name="Richardson P."/>
        </authorList>
    </citation>
    <scope>NUCLEOTIDE SEQUENCE [LARGE SCALE GENOMIC DNA]</scope>
    <source>
        <strain>HaA2</strain>
    </source>
</reference>
<sequence length="1390" mass="155046">MAQQTFTGRKRVRKFFGHIREVAEMPNLIEVQKASYDQFLMVAEPPGGRDDEGLQAVFRSVFPISDFSNASMLEFVRYEFEPPKYDVDECRQRGMTYAAPLKVTLRLIVFDIDEETGARSVKDIKEQDVYMGDIPLMTMNGTFVVNGTERVIVSQMHRSPGVFFDHDKGKTHSSGKLLFAARVIPYRGSWLDIEFDAKDIVFARIDRRRKIPVTSLMFALGLDGEEILSTFYNKILYKRTKEGWRVPFDASRFRGYSTVNDLIDADTGKVVLEAGKKLTVRAARQLQEKGLKALRLSDSELVGNYLAEDLVNPKTGEIFAEAGDELTGKPIKGDDKEIELFVGATPMKAILEQGYKELPLLDIDHVNVGPYIRNTLSADKNMTREDALFDIYRVMRPGEPPTLDSAQNMFQSLFFDAERYDLSAVGRVKMNMRLDLDAPDTHRTLRKEDILAVIKTLVGLRDGKGEIDDIDHLGNRRVRSVGELMENQYRIGLLRMERAIKERMSSVDIDTVMPQDLINAKPAAAAVREFFGSSQLSQFMDQTNPLSEITHKRRLSALGPGGLTRERAGFEVRDVHPTHYGRICPIETPEGPNIGLINSLATFARVNKYGFVETPYRKVKEGRVTDEVVYLSAMEEGRYAVAQANISLDAKGRFTDDLIVCRAGGTRDVVLIPADQVDYMDVSPKQLVSVAAALIPFLENDDANRALMGSNMQRQAVPLVRAEAPFVGTGMEGVVARDSGAAIAARRTGVIDQIDATRIVIRATEDLDPTKSGVDIYRLMKYQRSNQSTCINQRPLVKVGDKVAKGDIIADGPSTDLGELALGRNVLVAFMPWNGYNFEDSILLSERIVKEDVFTSIHIEEFEVMARDTKLGPEEITRDIPNVSEEALKNLDEAGIVYIGAEVRAGDILVGKITPKGESPMTPEEKLLRAIFGEKASDVRDTSLRVPPGVQGTIVEVRVFNRHGVDKDERALAIEREEIERLAKDRDDEQAILDRNVYGRLADLLDNRQGVAGPKGFKKDTKITRAVLEEYPKSQWWLFASPNDKLMAEIEAMRKQYDESKKGLEQRFLDKVEKLQRGDELPPGVMKMVKVFVAVKRKIQPGDKMAGRHGNKGVVSKIVPIEDMPFLEDGTHADIVLNPLGVPSRMNVGQILETHLGWACAGMGKKIGQTIDAYYQRQDLKPLRETLKKIYGDDETIKSLDDGELIELGRNLSHGVPIATPVFDGAKEADIEEMLKLAGFDASGQSTVYDGRTGDEFDRKVTVGYIYMLKLHHLVDDKIHARSIGPYSLVTQQPLGGKAQFGGQRFGEMEVWALEAYGAAYTLQEMLTVKSDDVAGRTKVYEAIVRGDDTFEAGIPESFNVLVKEMRSLGLNVDLHNSKLGVPPPAEAAE</sequence>
<gene>
    <name evidence="1" type="primary">rpoB</name>
    <name type="ordered locus">RPB_2285</name>
</gene>
<comment type="function">
    <text evidence="1">DNA-dependent RNA polymerase catalyzes the transcription of DNA into RNA using the four ribonucleoside triphosphates as substrates.</text>
</comment>
<comment type="catalytic activity">
    <reaction evidence="1">
        <text>RNA(n) + a ribonucleoside 5'-triphosphate = RNA(n+1) + diphosphate</text>
        <dbReference type="Rhea" id="RHEA:21248"/>
        <dbReference type="Rhea" id="RHEA-COMP:14527"/>
        <dbReference type="Rhea" id="RHEA-COMP:17342"/>
        <dbReference type="ChEBI" id="CHEBI:33019"/>
        <dbReference type="ChEBI" id="CHEBI:61557"/>
        <dbReference type="ChEBI" id="CHEBI:140395"/>
        <dbReference type="EC" id="2.7.7.6"/>
    </reaction>
</comment>
<comment type="subunit">
    <text evidence="1">The RNAP catalytic core consists of 2 alpha, 1 beta, 1 beta' and 1 omega subunit. When a sigma factor is associated with the core the holoenzyme is formed, which can initiate transcription.</text>
</comment>
<comment type="similarity">
    <text evidence="1">Belongs to the RNA polymerase beta chain family.</text>
</comment>
<feature type="chain" id="PRO_0000300390" description="DNA-directed RNA polymerase subunit beta">
    <location>
        <begin position="1"/>
        <end position="1390"/>
    </location>
</feature>
<keyword id="KW-0240">DNA-directed RNA polymerase</keyword>
<keyword id="KW-0548">Nucleotidyltransferase</keyword>
<keyword id="KW-1185">Reference proteome</keyword>
<keyword id="KW-0804">Transcription</keyword>
<keyword id="KW-0808">Transferase</keyword>
<evidence type="ECO:0000255" key="1">
    <source>
        <dbReference type="HAMAP-Rule" id="MF_01321"/>
    </source>
</evidence>
<dbReference type="EC" id="2.7.7.6" evidence="1"/>
<dbReference type="EMBL" id="CP000250">
    <property type="protein sequence ID" value="ABD06990.1"/>
    <property type="molecule type" value="Genomic_DNA"/>
</dbReference>
<dbReference type="RefSeq" id="WP_011441177.1">
    <property type="nucleotide sequence ID" value="NC_007778.1"/>
</dbReference>
<dbReference type="SMR" id="Q2IXS0"/>
<dbReference type="STRING" id="316058.RPB_2285"/>
<dbReference type="KEGG" id="rpb:RPB_2285"/>
<dbReference type="eggNOG" id="COG0085">
    <property type="taxonomic scope" value="Bacteria"/>
</dbReference>
<dbReference type="HOGENOM" id="CLU_000524_4_3_5"/>
<dbReference type="OrthoDB" id="9803954at2"/>
<dbReference type="Proteomes" id="UP000008809">
    <property type="component" value="Chromosome"/>
</dbReference>
<dbReference type="GO" id="GO:0000428">
    <property type="term" value="C:DNA-directed RNA polymerase complex"/>
    <property type="evidence" value="ECO:0007669"/>
    <property type="project" value="UniProtKB-KW"/>
</dbReference>
<dbReference type="GO" id="GO:0003677">
    <property type="term" value="F:DNA binding"/>
    <property type="evidence" value="ECO:0007669"/>
    <property type="project" value="UniProtKB-UniRule"/>
</dbReference>
<dbReference type="GO" id="GO:0003899">
    <property type="term" value="F:DNA-directed RNA polymerase activity"/>
    <property type="evidence" value="ECO:0007669"/>
    <property type="project" value="UniProtKB-UniRule"/>
</dbReference>
<dbReference type="GO" id="GO:0032549">
    <property type="term" value="F:ribonucleoside binding"/>
    <property type="evidence" value="ECO:0007669"/>
    <property type="project" value="InterPro"/>
</dbReference>
<dbReference type="GO" id="GO:0006351">
    <property type="term" value="P:DNA-templated transcription"/>
    <property type="evidence" value="ECO:0007669"/>
    <property type="project" value="UniProtKB-UniRule"/>
</dbReference>
<dbReference type="CDD" id="cd00653">
    <property type="entry name" value="RNA_pol_B_RPB2"/>
    <property type="match status" value="1"/>
</dbReference>
<dbReference type="FunFam" id="2.40.50.100:FF:000006">
    <property type="entry name" value="DNA-directed RNA polymerase subunit beta"/>
    <property type="match status" value="1"/>
</dbReference>
<dbReference type="FunFam" id="3.90.1800.10:FF:000001">
    <property type="entry name" value="DNA-directed RNA polymerase subunit beta"/>
    <property type="match status" value="1"/>
</dbReference>
<dbReference type="Gene3D" id="2.40.50.100">
    <property type="match status" value="1"/>
</dbReference>
<dbReference type="Gene3D" id="2.40.50.150">
    <property type="match status" value="1"/>
</dbReference>
<dbReference type="Gene3D" id="3.90.1100.10">
    <property type="match status" value="2"/>
</dbReference>
<dbReference type="Gene3D" id="2.30.150.10">
    <property type="entry name" value="DNA-directed RNA polymerase, beta subunit, external 1 domain"/>
    <property type="match status" value="1"/>
</dbReference>
<dbReference type="Gene3D" id="2.40.270.10">
    <property type="entry name" value="DNA-directed RNA polymerase, subunit 2, domain 6"/>
    <property type="match status" value="1"/>
</dbReference>
<dbReference type="Gene3D" id="3.90.1800.10">
    <property type="entry name" value="RNA polymerase alpha subunit dimerisation domain"/>
    <property type="match status" value="1"/>
</dbReference>
<dbReference type="Gene3D" id="3.90.1110.10">
    <property type="entry name" value="RNA polymerase Rpb2, domain 2"/>
    <property type="match status" value="1"/>
</dbReference>
<dbReference type="HAMAP" id="MF_01321">
    <property type="entry name" value="RNApol_bact_RpoB"/>
    <property type="match status" value="1"/>
</dbReference>
<dbReference type="InterPro" id="IPR042107">
    <property type="entry name" value="DNA-dir_RNA_pol_bsu_ext_1_sf"/>
</dbReference>
<dbReference type="InterPro" id="IPR019462">
    <property type="entry name" value="DNA-dir_RNA_pol_bsu_external_1"/>
</dbReference>
<dbReference type="InterPro" id="IPR015712">
    <property type="entry name" value="DNA-dir_RNA_pol_su2"/>
</dbReference>
<dbReference type="InterPro" id="IPR007120">
    <property type="entry name" value="DNA-dir_RNAP_su2_dom"/>
</dbReference>
<dbReference type="InterPro" id="IPR037033">
    <property type="entry name" value="DNA-dir_RNAP_su2_hyb_sf"/>
</dbReference>
<dbReference type="InterPro" id="IPR010243">
    <property type="entry name" value="RNA_pol_bsu_bac"/>
</dbReference>
<dbReference type="InterPro" id="IPR007121">
    <property type="entry name" value="RNA_pol_bsu_CS"/>
</dbReference>
<dbReference type="InterPro" id="IPR007644">
    <property type="entry name" value="RNA_pol_bsu_protrusion"/>
</dbReference>
<dbReference type="InterPro" id="IPR007642">
    <property type="entry name" value="RNA_pol_Rpb2_2"/>
</dbReference>
<dbReference type="InterPro" id="IPR037034">
    <property type="entry name" value="RNA_pol_Rpb2_2_sf"/>
</dbReference>
<dbReference type="InterPro" id="IPR007645">
    <property type="entry name" value="RNA_pol_Rpb2_3"/>
</dbReference>
<dbReference type="InterPro" id="IPR007641">
    <property type="entry name" value="RNA_pol_Rpb2_7"/>
</dbReference>
<dbReference type="InterPro" id="IPR014724">
    <property type="entry name" value="RNA_pol_RPB2_OB-fold"/>
</dbReference>
<dbReference type="NCBIfam" id="NF001616">
    <property type="entry name" value="PRK00405.1"/>
    <property type="match status" value="1"/>
</dbReference>
<dbReference type="NCBIfam" id="TIGR02013">
    <property type="entry name" value="rpoB"/>
    <property type="match status" value="1"/>
</dbReference>
<dbReference type="PANTHER" id="PTHR20856">
    <property type="entry name" value="DNA-DIRECTED RNA POLYMERASE I SUBUNIT 2"/>
    <property type="match status" value="1"/>
</dbReference>
<dbReference type="Pfam" id="PF04563">
    <property type="entry name" value="RNA_pol_Rpb2_1"/>
    <property type="match status" value="1"/>
</dbReference>
<dbReference type="Pfam" id="PF04561">
    <property type="entry name" value="RNA_pol_Rpb2_2"/>
    <property type="match status" value="2"/>
</dbReference>
<dbReference type="Pfam" id="PF04565">
    <property type="entry name" value="RNA_pol_Rpb2_3"/>
    <property type="match status" value="1"/>
</dbReference>
<dbReference type="Pfam" id="PF10385">
    <property type="entry name" value="RNA_pol_Rpb2_45"/>
    <property type="match status" value="1"/>
</dbReference>
<dbReference type="Pfam" id="PF00562">
    <property type="entry name" value="RNA_pol_Rpb2_6"/>
    <property type="match status" value="1"/>
</dbReference>
<dbReference type="Pfam" id="PF04560">
    <property type="entry name" value="RNA_pol_Rpb2_7"/>
    <property type="match status" value="1"/>
</dbReference>
<dbReference type="SUPFAM" id="SSF64484">
    <property type="entry name" value="beta and beta-prime subunits of DNA dependent RNA-polymerase"/>
    <property type="match status" value="1"/>
</dbReference>
<dbReference type="PROSITE" id="PS01166">
    <property type="entry name" value="RNA_POL_BETA"/>
    <property type="match status" value="1"/>
</dbReference>
<protein>
    <recommendedName>
        <fullName evidence="1">DNA-directed RNA polymerase subunit beta</fullName>
        <shortName evidence="1">RNAP subunit beta</shortName>
        <ecNumber evidence="1">2.7.7.6</ecNumber>
    </recommendedName>
    <alternativeName>
        <fullName evidence="1">RNA polymerase subunit beta</fullName>
    </alternativeName>
    <alternativeName>
        <fullName evidence="1">Transcriptase subunit beta</fullName>
    </alternativeName>
</protein>
<accession>Q2IXS0</accession>